<name>RS11_PSYIN</name>
<sequence>MAKTPTRARKRVKKQVADGMAHIHASFNNTIVTITDRQGNALSWATAGGSGFRGSRKSTPFAAQIAAERAAEAAKEYGLKNVEVFVNGPGPGRESSIRALNAAGFRVTNITDVTPIPHNGCRPPKKRRV</sequence>
<protein>
    <recommendedName>
        <fullName evidence="1">Small ribosomal subunit protein uS11</fullName>
    </recommendedName>
    <alternativeName>
        <fullName evidence="2">30S ribosomal protein S11</fullName>
    </alternativeName>
</protein>
<accession>A1SXW6</accession>
<gene>
    <name evidence="1" type="primary">rpsK1</name>
    <name type="ordered locus">Ping_2612</name>
</gene>
<gene>
    <name evidence="1" type="primary">rpsK2</name>
    <name type="ordered locus">Ping_3501</name>
</gene>
<dbReference type="EMBL" id="CP000510">
    <property type="protein sequence ID" value="ABM04331.1"/>
    <property type="molecule type" value="Genomic_DNA"/>
</dbReference>
<dbReference type="EMBL" id="CP000510">
    <property type="protein sequence ID" value="ABM05184.1"/>
    <property type="molecule type" value="Genomic_DNA"/>
</dbReference>
<dbReference type="RefSeq" id="WP_011770888.1">
    <property type="nucleotide sequence ID" value="NC_008709.1"/>
</dbReference>
<dbReference type="SMR" id="A1SXW6"/>
<dbReference type="STRING" id="357804.Ping_2612"/>
<dbReference type="KEGG" id="pin:Ping_2612"/>
<dbReference type="KEGG" id="pin:Ping_3501"/>
<dbReference type="eggNOG" id="COG0100">
    <property type="taxonomic scope" value="Bacteria"/>
</dbReference>
<dbReference type="HOGENOM" id="CLU_072439_5_0_6"/>
<dbReference type="OrthoDB" id="9806415at2"/>
<dbReference type="Proteomes" id="UP000000639">
    <property type="component" value="Chromosome"/>
</dbReference>
<dbReference type="GO" id="GO:1990904">
    <property type="term" value="C:ribonucleoprotein complex"/>
    <property type="evidence" value="ECO:0007669"/>
    <property type="project" value="UniProtKB-KW"/>
</dbReference>
<dbReference type="GO" id="GO:0005840">
    <property type="term" value="C:ribosome"/>
    <property type="evidence" value="ECO:0007669"/>
    <property type="project" value="UniProtKB-KW"/>
</dbReference>
<dbReference type="GO" id="GO:0019843">
    <property type="term" value="F:rRNA binding"/>
    <property type="evidence" value="ECO:0007669"/>
    <property type="project" value="UniProtKB-UniRule"/>
</dbReference>
<dbReference type="GO" id="GO:0003735">
    <property type="term" value="F:structural constituent of ribosome"/>
    <property type="evidence" value="ECO:0007669"/>
    <property type="project" value="InterPro"/>
</dbReference>
<dbReference type="GO" id="GO:0006412">
    <property type="term" value="P:translation"/>
    <property type="evidence" value="ECO:0007669"/>
    <property type="project" value="UniProtKB-UniRule"/>
</dbReference>
<dbReference type="FunFam" id="3.30.420.80:FF:000001">
    <property type="entry name" value="30S ribosomal protein S11"/>
    <property type="match status" value="1"/>
</dbReference>
<dbReference type="Gene3D" id="3.30.420.80">
    <property type="entry name" value="Ribosomal protein S11"/>
    <property type="match status" value="1"/>
</dbReference>
<dbReference type="HAMAP" id="MF_01310">
    <property type="entry name" value="Ribosomal_uS11"/>
    <property type="match status" value="1"/>
</dbReference>
<dbReference type="InterPro" id="IPR001971">
    <property type="entry name" value="Ribosomal_uS11"/>
</dbReference>
<dbReference type="InterPro" id="IPR019981">
    <property type="entry name" value="Ribosomal_uS11_bac-type"/>
</dbReference>
<dbReference type="InterPro" id="IPR018102">
    <property type="entry name" value="Ribosomal_uS11_CS"/>
</dbReference>
<dbReference type="InterPro" id="IPR036967">
    <property type="entry name" value="Ribosomal_uS11_sf"/>
</dbReference>
<dbReference type="NCBIfam" id="NF003698">
    <property type="entry name" value="PRK05309.1"/>
    <property type="match status" value="1"/>
</dbReference>
<dbReference type="NCBIfam" id="TIGR03632">
    <property type="entry name" value="uS11_bact"/>
    <property type="match status" value="1"/>
</dbReference>
<dbReference type="PANTHER" id="PTHR11759">
    <property type="entry name" value="40S RIBOSOMAL PROTEIN S14/30S RIBOSOMAL PROTEIN S11"/>
    <property type="match status" value="1"/>
</dbReference>
<dbReference type="Pfam" id="PF00411">
    <property type="entry name" value="Ribosomal_S11"/>
    <property type="match status" value="1"/>
</dbReference>
<dbReference type="PIRSF" id="PIRSF002131">
    <property type="entry name" value="Ribosomal_S11"/>
    <property type="match status" value="1"/>
</dbReference>
<dbReference type="SUPFAM" id="SSF53137">
    <property type="entry name" value="Translational machinery components"/>
    <property type="match status" value="1"/>
</dbReference>
<dbReference type="PROSITE" id="PS00054">
    <property type="entry name" value="RIBOSOMAL_S11"/>
    <property type="match status" value="1"/>
</dbReference>
<evidence type="ECO:0000255" key="1">
    <source>
        <dbReference type="HAMAP-Rule" id="MF_01310"/>
    </source>
</evidence>
<evidence type="ECO:0000305" key="2"/>
<feature type="chain" id="PRO_0000294830" description="Small ribosomal subunit protein uS11">
    <location>
        <begin position="1"/>
        <end position="129"/>
    </location>
</feature>
<comment type="function">
    <text evidence="1">Located on the platform of the 30S subunit, it bridges several disparate RNA helices of the 16S rRNA. Forms part of the Shine-Dalgarno cleft in the 70S ribosome.</text>
</comment>
<comment type="subunit">
    <text evidence="1">Part of the 30S ribosomal subunit. Interacts with proteins S7 and S18. Binds to IF-3.</text>
</comment>
<comment type="similarity">
    <text evidence="1">Belongs to the universal ribosomal protein uS11 family.</text>
</comment>
<reference key="1">
    <citation type="journal article" date="2008" name="BMC Genomics">
        <title>Genomics of an extreme psychrophile, Psychromonas ingrahamii.</title>
        <authorList>
            <person name="Riley M."/>
            <person name="Staley J.T."/>
            <person name="Danchin A."/>
            <person name="Wang T.Z."/>
            <person name="Brettin T.S."/>
            <person name="Hauser L.J."/>
            <person name="Land M.L."/>
            <person name="Thompson L.S."/>
        </authorList>
    </citation>
    <scope>NUCLEOTIDE SEQUENCE [LARGE SCALE GENOMIC DNA]</scope>
    <source>
        <strain>DSM 17664 / CCUG 51855 / 37</strain>
    </source>
</reference>
<organism>
    <name type="scientific">Psychromonas ingrahamii (strain DSM 17664 / CCUG 51855 / 37)</name>
    <dbReference type="NCBI Taxonomy" id="357804"/>
    <lineage>
        <taxon>Bacteria</taxon>
        <taxon>Pseudomonadati</taxon>
        <taxon>Pseudomonadota</taxon>
        <taxon>Gammaproteobacteria</taxon>
        <taxon>Alteromonadales</taxon>
        <taxon>Psychromonadaceae</taxon>
        <taxon>Psychromonas</taxon>
    </lineage>
</organism>
<proteinExistence type="inferred from homology"/>
<keyword id="KW-1185">Reference proteome</keyword>
<keyword id="KW-0687">Ribonucleoprotein</keyword>
<keyword id="KW-0689">Ribosomal protein</keyword>
<keyword id="KW-0694">RNA-binding</keyword>
<keyword id="KW-0699">rRNA-binding</keyword>